<reference key="1">
    <citation type="journal article" date="2009" name="BMC Genomics">
        <title>Pseudogene accumulation in the evolutionary histories of Salmonella enterica serovars Paratyphi A and Typhi.</title>
        <authorList>
            <person name="Holt K.E."/>
            <person name="Thomson N.R."/>
            <person name="Wain J."/>
            <person name="Langridge G.C."/>
            <person name="Hasan R."/>
            <person name="Bhutta Z.A."/>
            <person name="Quail M.A."/>
            <person name="Norbertczak H."/>
            <person name="Walker D."/>
            <person name="Simmonds M."/>
            <person name="White B."/>
            <person name="Bason N."/>
            <person name="Mungall K."/>
            <person name="Dougan G."/>
            <person name="Parkhill J."/>
        </authorList>
    </citation>
    <scope>NUCLEOTIDE SEQUENCE [LARGE SCALE GENOMIC DNA]</scope>
    <source>
        <strain>AKU_12601</strain>
    </source>
</reference>
<gene>
    <name evidence="1" type="primary">rpsU</name>
    <name type="ordered locus">SSPA2874</name>
</gene>
<protein>
    <recommendedName>
        <fullName evidence="1">Small ribosomal subunit protein bS21</fullName>
    </recommendedName>
    <alternativeName>
        <fullName evidence="3">30S ribosomal protein S21</fullName>
    </alternativeName>
</protein>
<keyword id="KW-0687">Ribonucleoprotein</keyword>
<keyword id="KW-0689">Ribosomal protein</keyword>
<accession>B5BG21</accession>
<sequence>MPVIKVRENEPFDVALRRFKRSCEKAGVLAEVRRREFYEKPTTERKRAKASAVKRHAKKLARENARRTRLY</sequence>
<proteinExistence type="inferred from homology"/>
<organism>
    <name type="scientific">Salmonella paratyphi A (strain AKU_12601)</name>
    <dbReference type="NCBI Taxonomy" id="554290"/>
    <lineage>
        <taxon>Bacteria</taxon>
        <taxon>Pseudomonadati</taxon>
        <taxon>Pseudomonadota</taxon>
        <taxon>Gammaproteobacteria</taxon>
        <taxon>Enterobacterales</taxon>
        <taxon>Enterobacteriaceae</taxon>
        <taxon>Salmonella</taxon>
    </lineage>
</organism>
<comment type="similarity">
    <text evidence="1">Belongs to the bacterial ribosomal protein bS21 family.</text>
</comment>
<name>RS21_SALPK</name>
<evidence type="ECO:0000255" key="1">
    <source>
        <dbReference type="HAMAP-Rule" id="MF_00358"/>
    </source>
</evidence>
<evidence type="ECO:0000256" key="2">
    <source>
        <dbReference type="SAM" id="MobiDB-lite"/>
    </source>
</evidence>
<evidence type="ECO:0000305" key="3"/>
<dbReference type="EMBL" id="FM200053">
    <property type="protein sequence ID" value="CAR61121.1"/>
    <property type="molecule type" value="Genomic_DNA"/>
</dbReference>
<dbReference type="RefSeq" id="WP_001144069.1">
    <property type="nucleotide sequence ID" value="NC_011147.1"/>
</dbReference>
<dbReference type="SMR" id="B5BG21"/>
<dbReference type="GeneID" id="98390195"/>
<dbReference type="KEGG" id="sek:SSPA2874"/>
<dbReference type="HOGENOM" id="CLU_159258_1_0_6"/>
<dbReference type="Proteomes" id="UP000001869">
    <property type="component" value="Chromosome"/>
</dbReference>
<dbReference type="GO" id="GO:1990904">
    <property type="term" value="C:ribonucleoprotein complex"/>
    <property type="evidence" value="ECO:0007669"/>
    <property type="project" value="UniProtKB-KW"/>
</dbReference>
<dbReference type="GO" id="GO:0005840">
    <property type="term" value="C:ribosome"/>
    <property type="evidence" value="ECO:0007669"/>
    <property type="project" value="UniProtKB-KW"/>
</dbReference>
<dbReference type="GO" id="GO:0003735">
    <property type="term" value="F:structural constituent of ribosome"/>
    <property type="evidence" value="ECO:0007669"/>
    <property type="project" value="InterPro"/>
</dbReference>
<dbReference type="GO" id="GO:0006412">
    <property type="term" value="P:translation"/>
    <property type="evidence" value="ECO:0007669"/>
    <property type="project" value="UniProtKB-UniRule"/>
</dbReference>
<dbReference type="FunFam" id="1.20.5.1150:FF:000001">
    <property type="entry name" value="30S ribosomal protein S21"/>
    <property type="match status" value="1"/>
</dbReference>
<dbReference type="Gene3D" id="1.20.5.1150">
    <property type="entry name" value="Ribosomal protein S8"/>
    <property type="match status" value="1"/>
</dbReference>
<dbReference type="HAMAP" id="MF_00358">
    <property type="entry name" value="Ribosomal_bS21"/>
    <property type="match status" value="1"/>
</dbReference>
<dbReference type="InterPro" id="IPR001911">
    <property type="entry name" value="Ribosomal_bS21"/>
</dbReference>
<dbReference type="InterPro" id="IPR018278">
    <property type="entry name" value="Ribosomal_bS21_CS"/>
</dbReference>
<dbReference type="InterPro" id="IPR038380">
    <property type="entry name" value="Ribosomal_bS21_sf"/>
</dbReference>
<dbReference type="NCBIfam" id="TIGR00030">
    <property type="entry name" value="S21p"/>
    <property type="match status" value="1"/>
</dbReference>
<dbReference type="PANTHER" id="PTHR21109">
    <property type="entry name" value="MITOCHONDRIAL 28S RIBOSOMAL PROTEIN S21"/>
    <property type="match status" value="1"/>
</dbReference>
<dbReference type="PANTHER" id="PTHR21109:SF22">
    <property type="entry name" value="SMALL RIBOSOMAL SUBUNIT PROTEIN BS21"/>
    <property type="match status" value="1"/>
</dbReference>
<dbReference type="Pfam" id="PF01165">
    <property type="entry name" value="Ribosomal_S21"/>
    <property type="match status" value="1"/>
</dbReference>
<dbReference type="PRINTS" id="PR00976">
    <property type="entry name" value="RIBOSOMALS21"/>
</dbReference>
<dbReference type="PROSITE" id="PS01181">
    <property type="entry name" value="RIBOSOMAL_S21"/>
    <property type="match status" value="1"/>
</dbReference>
<feature type="chain" id="PRO_1000120660" description="Small ribosomal subunit protein bS21">
    <location>
        <begin position="1"/>
        <end position="71"/>
    </location>
</feature>
<feature type="region of interest" description="Disordered" evidence="2">
    <location>
        <begin position="43"/>
        <end position="71"/>
    </location>
</feature>
<feature type="compositionally biased region" description="Basic residues" evidence="2">
    <location>
        <begin position="46"/>
        <end position="59"/>
    </location>
</feature>
<feature type="compositionally biased region" description="Basic and acidic residues" evidence="2">
    <location>
        <begin position="60"/>
        <end position="71"/>
    </location>
</feature>